<evidence type="ECO:0000255" key="1">
    <source>
        <dbReference type="HAMAP-Rule" id="MF_01026"/>
    </source>
</evidence>
<reference key="1">
    <citation type="submission" date="2007-06" db="EMBL/GenBank/DDBJ databases">
        <authorList>
            <person name="Dodson R.J."/>
            <person name="Harkins D."/>
            <person name="Paulsen I.T."/>
        </authorList>
    </citation>
    <scope>NUCLEOTIDE SEQUENCE [LARGE SCALE GENOMIC DNA]</scope>
    <source>
        <strain>DSM 24068 / PA7</strain>
    </source>
</reference>
<accession>A6V2V3</accession>
<comment type="function">
    <text evidence="1">Catalyzes the isomerization between 2-isopropylmalate and 3-isopropylmalate, via the formation of 2-isopropylmaleate.</text>
</comment>
<comment type="catalytic activity">
    <reaction evidence="1">
        <text>(2R,3S)-3-isopropylmalate = (2S)-2-isopropylmalate</text>
        <dbReference type="Rhea" id="RHEA:32287"/>
        <dbReference type="ChEBI" id="CHEBI:1178"/>
        <dbReference type="ChEBI" id="CHEBI:35121"/>
        <dbReference type="EC" id="4.2.1.33"/>
    </reaction>
</comment>
<comment type="cofactor">
    <cofactor evidence="1">
        <name>[4Fe-4S] cluster</name>
        <dbReference type="ChEBI" id="CHEBI:49883"/>
    </cofactor>
    <text evidence="1">Binds 1 [4Fe-4S] cluster per subunit.</text>
</comment>
<comment type="pathway">
    <text evidence="1">Amino-acid biosynthesis; L-leucine biosynthesis; L-leucine from 3-methyl-2-oxobutanoate: step 2/4.</text>
</comment>
<comment type="subunit">
    <text evidence="1">Heterodimer of LeuC and LeuD.</text>
</comment>
<comment type="similarity">
    <text evidence="1">Belongs to the aconitase/IPM isomerase family. LeuC type 1 subfamily.</text>
</comment>
<organism>
    <name type="scientific">Pseudomonas paraeruginosa (strain DSM 24068 / PA7)</name>
    <name type="common">Pseudomonas aeruginosa (strain PA7)</name>
    <dbReference type="NCBI Taxonomy" id="381754"/>
    <lineage>
        <taxon>Bacteria</taxon>
        <taxon>Pseudomonadati</taxon>
        <taxon>Pseudomonadota</taxon>
        <taxon>Gammaproteobacteria</taxon>
        <taxon>Pseudomonadales</taxon>
        <taxon>Pseudomonadaceae</taxon>
        <taxon>Pseudomonas</taxon>
        <taxon>Pseudomonas paraeruginosa</taxon>
    </lineage>
</organism>
<keyword id="KW-0004">4Fe-4S</keyword>
<keyword id="KW-0028">Amino-acid biosynthesis</keyword>
<keyword id="KW-0100">Branched-chain amino acid biosynthesis</keyword>
<keyword id="KW-0408">Iron</keyword>
<keyword id="KW-0411">Iron-sulfur</keyword>
<keyword id="KW-0432">Leucine biosynthesis</keyword>
<keyword id="KW-0456">Lyase</keyword>
<keyword id="KW-0479">Metal-binding</keyword>
<dbReference type="EC" id="4.2.1.33" evidence="1"/>
<dbReference type="EMBL" id="CP000744">
    <property type="protein sequence ID" value="ABR85233.1"/>
    <property type="molecule type" value="Genomic_DNA"/>
</dbReference>
<dbReference type="RefSeq" id="WP_003155361.1">
    <property type="nucleotide sequence ID" value="NC_009656.1"/>
</dbReference>
<dbReference type="SMR" id="A6V2V3"/>
<dbReference type="GeneID" id="77220367"/>
<dbReference type="KEGG" id="pap:PSPA7_2012"/>
<dbReference type="HOGENOM" id="CLU_006714_3_4_6"/>
<dbReference type="UniPathway" id="UPA00048">
    <property type="reaction ID" value="UER00071"/>
</dbReference>
<dbReference type="Proteomes" id="UP000001582">
    <property type="component" value="Chromosome"/>
</dbReference>
<dbReference type="GO" id="GO:0003861">
    <property type="term" value="F:3-isopropylmalate dehydratase activity"/>
    <property type="evidence" value="ECO:0007669"/>
    <property type="project" value="UniProtKB-UniRule"/>
</dbReference>
<dbReference type="GO" id="GO:0051539">
    <property type="term" value="F:4 iron, 4 sulfur cluster binding"/>
    <property type="evidence" value="ECO:0007669"/>
    <property type="project" value="UniProtKB-KW"/>
</dbReference>
<dbReference type="GO" id="GO:0046872">
    <property type="term" value="F:metal ion binding"/>
    <property type="evidence" value="ECO:0007669"/>
    <property type="project" value="UniProtKB-KW"/>
</dbReference>
<dbReference type="GO" id="GO:0009098">
    <property type="term" value="P:L-leucine biosynthetic process"/>
    <property type="evidence" value="ECO:0007669"/>
    <property type="project" value="UniProtKB-UniRule"/>
</dbReference>
<dbReference type="CDD" id="cd01583">
    <property type="entry name" value="IPMI"/>
    <property type="match status" value="1"/>
</dbReference>
<dbReference type="FunFam" id="3.30.499.10:FF:000007">
    <property type="entry name" value="3-isopropylmalate dehydratase large subunit"/>
    <property type="match status" value="1"/>
</dbReference>
<dbReference type="Gene3D" id="3.30.499.10">
    <property type="entry name" value="Aconitase, domain 3"/>
    <property type="match status" value="2"/>
</dbReference>
<dbReference type="HAMAP" id="MF_01026">
    <property type="entry name" value="LeuC_type1"/>
    <property type="match status" value="1"/>
</dbReference>
<dbReference type="InterPro" id="IPR004430">
    <property type="entry name" value="3-IsopropMal_deHydase_lsu"/>
</dbReference>
<dbReference type="InterPro" id="IPR015931">
    <property type="entry name" value="Acnase/IPM_dHydase_lsu_aba_1/3"/>
</dbReference>
<dbReference type="InterPro" id="IPR001030">
    <property type="entry name" value="Acoase/IPM_deHydtase_lsu_aba"/>
</dbReference>
<dbReference type="InterPro" id="IPR018136">
    <property type="entry name" value="Aconitase_4Fe-4S_BS"/>
</dbReference>
<dbReference type="InterPro" id="IPR036008">
    <property type="entry name" value="Aconitase_4Fe-4S_dom"/>
</dbReference>
<dbReference type="InterPro" id="IPR050067">
    <property type="entry name" value="IPM_dehydratase_rel_enz"/>
</dbReference>
<dbReference type="InterPro" id="IPR033941">
    <property type="entry name" value="IPMI_cat"/>
</dbReference>
<dbReference type="NCBIfam" id="TIGR00170">
    <property type="entry name" value="leuC"/>
    <property type="match status" value="1"/>
</dbReference>
<dbReference type="NCBIfam" id="NF004016">
    <property type="entry name" value="PRK05478.1"/>
    <property type="match status" value="1"/>
</dbReference>
<dbReference type="NCBIfam" id="NF009116">
    <property type="entry name" value="PRK12466.1"/>
    <property type="match status" value="1"/>
</dbReference>
<dbReference type="PANTHER" id="PTHR43822:SF9">
    <property type="entry name" value="3-ISOPROPYLMALATE DEHYDRATASE"/>
    <property type="match status" value="1"/>
</dbReference>
<dbReference type="PANTHER" id="PTHR43822">
    <property type="entry name" value="HOMOACONITASE, MITOCHONDRIAL-RELATED"/>
    <property type="match status" value="1"/>
</dbReference>
<dbReference type="Pfam" id="PF00330">
    <property type="entry name" value="Aconitase"/>
    <property type="match status" value="1"/>
</dbReference>
<dbReference type="PRINTS" id="PR00415">
    <property type="entry name" value="ACONITASE"/>
</dbReference>
<dbReference type="SUPFAM" id="SSF53732">
    <property type="entry name" value="Aconitase iron-sulfur domain"/>
    <property type="match status" value="1"/>
</dbReference>
<dbReference type="PROSITE" id="PS00450">
    <property type="entry name" value="ACONITASE_1"/>
    <property type="match status" value="1"/>
</dbReference>
<dbReference type="PROSITE" id="PS01244">
    <property type="entry name" value="ACONITASE_2"/>
    <property type="match status" value="1"/>
</dbReference>
<proteinExistence type="inferred from homology"/>
<gene>
    <name evidence="1" type="primary">leuC</name>
    <name type="ordered locus">PSPA7_2012</name>
</gene>
<protein>
    <recommendedName>
        <fullName evidence="1">3-isopropylmalate dehydratase large subunit</fullName>
        <ecNumber evidence="1">4.2.1.33</ecNumber>
    </recommendedName>
    <alternativeName>
        <fullName evidence="1">Alpha-IPM isomerase</fullName>
        <shortName evidence="1">IPMI</shortName>
    </alternativeName>
    <alternativeName>
        <fullName evidence="1">Isopropylmalate isomerase</fullName>
    </alternativeName>
</protein>
<sequence>MAGKTLYDKLWDMHLVKQRDDGSALIYIDRHILHEVTSPQAFEGLRLAGRKPWRIDANIATPDHNVPTTRTERKGGLAAIADEVSRLQVQTLDENCDDFGITEFKMNDVRQGIVHVVGPEQGATLPGMTVVCGDSHTSTHGAFGALAHGIGTSEVEHVLATQCLVAKKMKNMLVKVEGKLPAGVTAKDIVLAVIGRIGTAGGNGHAIEFAGSAIRDLSIEGRMTICNMSIEAGARVGLVAVDQKTIDYVKGRPFAPSAEQWEQAVACWQGLVSDADARFDTVVELDAAQIKPQVSWGTSPEMVLAVDQNVPDPARESDPIKRGSIERALKYMGLQPNQAITDIQLDRVFIGSCTNSRIEDLRAAAEVARGRKVAATIKQALVVPGSGLVKEQAEKEGLDRIFIEAGFEWREPGCSMCLAMNPDRLESGEHCASTSNRNFEGRQGAGGRTHLVSPAMAAAAAVNGRFIDVRELLA</sequence>
<feature type="chain" id="PRO_1000063590" description="3-isopropylmalate dehydratase large subunit">
    <location>
        <begin position="1"/>
        <end position="474"/>
    </location>
</feature>
<feature type="binding site" evidence="1">
    <location>
        <position position="353"/>
    </location>
    <ligand>
        <name>[4Fe-4S] cluster</name>
        <dbReference type="ChEBI" id="CHEBI:49883"/>
    </ligand>
</feature>
<feature type="binding site" evidence="1">
    <location>
        <position position="414"/>
    </location>
    <ligand>
        <name>[4Fe-4S] cluster</name>
        <dbReference type="ChEBI" id="CHEBI:49883"/>
    </ligand>
</feature>
<feature type="binding site" evidence="1">
    <location>
        <position position="417"/>
    </location>
    <ligand>
        <name>[4Fe-4S] cluster</name>
        <dbReference type="ChEBI" id="CHEBI:49883"/>
    </ligand>
</feature>
<name>LEUC_PSEP7</name>